<reference key="1">
    <citation type="journal article" date="2008" name="PLoS ONE">
        <title>Environmental adaptation: genomic analysis of the piezotolerant and psychrotolerant deep-sea iron reducing bacterium Shewanella piezotolerans WP3.</title>
        <authorList>
            <person name="Wang F."/>
            <person name="Wang J."/>
            <person name="Jian H."/>
            <person name="Zhang B."/>
            <person name="Li S."/>
            <person name="Wang F."/>
            <person name="Zeng X."/>
            <person name="Gao L."/>
            <person name="Bartlett D.H."/>
            <person name="Yu J."/>
            <person name="Hu S."/>
            <person name="Xiao X."/>
        </authorList>
    </citation>
    <scope>NUCLEOTIDE SEQUENCE [LARGE SCALE GENOMIC DNA]</scope>
    <source>
        <strain>WP3 / JCM 13877</strain>
    </source>
</reference>
<dbReference type="EMBL" id="CP000472">
    <property type="protein sequence ID" value="ACJ30662.1"/>
    <property type="molecule type" value="Genomic_DNA"/>
</dbReference>
<dbReference type="RefSeq" id="WP_020914003.1">
    <property type="nucleotide sequence ID" value="NC_011566.1"/>
</dbReference>
<dbReference type="SMR" id="B8CSN6"/>
<dbReference type="STRING" id="225849.swp_3992"/>
<dbReference type="KEGG" id="swp:swp_3992"/>
<dbReference type="eggNOG" id="COG3381">
    <property type="taxonomic scope" value="Bacteria"/>
</dbReference>
<dbReference type="HOGENOM" id="CLU_077650_4_0_6"/>
<dbReference type="OrthoDB" id="7849731at2"/>
<dbReference type="Proteomes" id="UP000000753">
    <property type="component" value="Chromosome"/>
</dbReference>
<dbReference type="GO" id="GO:0005737">
    <property type="term" value="C:cytoplasm"/>
    <property type="evidence" value="ECO:0007669"/>
    <property type="project" value="UniProtKB-SubCell"/>
</dbReference>
<dbReference type="GO" id="GO:0051259">
    <property type="term" value="P:protein complex oligomerization"/>
    <property type="evidence" value="ECO:0007669"/>
    <property type="project" value="InterPro"/>
</dbReference>
<dbReference type="GO" id="GO:0006457">
    <property type="term" value="P:protein folding"/>
    <property type="evidence" value="ECO:0007669"/>
    <property type="project" value="UniProtKB-UniRule"/>
</dbReference>
<dbReference type="Gene3D" id="1.20.120.1820">
    <property type="match status" value="1"/>
</dbReference>
<dbReference type="Gene3D" id="1.20.1280.20">
    <property type="entry name" value="HscB, C-terminal domain"/>
    <property type="match status" value="1"/>
</dbReference>
<dbReference type="HAMAP" id="MF_01150">
    <property type="entry name" value="TorD"/>
    <property type="match status" value="1"/>
</dbReference>
<dbReference type="InterPro" id="IPR023069">
    <property type="entry name" value="Chaperone_TorD"/>
</dbReference>
<dbReference type="InterPro" id="IPR020945">
    <property type="entry name" value="DMSO/NO3_reduct_chaperone"/>
</dbReference>
<dbReference type="InterPro" id="IPR036386">
    <property type="entry name" value="HscB_C_sf"/>
</dbReference>
<dbReference type="InterPro" id="IPR036411">
    <property type="entry name" value="TorD-like_sf"/>
</dbReference>
<dbReference type="InterPro" id="IPR050289">
    <property type="entry name" value="TorD/DmsD_chaperones"/>
</dbReference>
<dbReference type="NCBIfam" id="NF003442">
    <property type="entry name" value="PRK04976.1"/>
    <property type="match status" value="1"/>
</dbReference>
<dbReference type="PANTHER" id="PTHR34227:SF11">
    <property type="entry name" value="CHAPERONE PROTEIN TORD"/>
    <property type="match status" value="1"/>
</dbReference>
<dbReference type="PANTHER" id="PTHR34227">
    <property type="entry name" value="CHAPERONE PROTEIN YCDY"/>
    <property type="match status" value="1"/>
</dbReference>
<dbReference type="Pfam" id="PF02613">
    <property type="entry name" value="Nitrate_red_del"/>
    <property type="match status" value="1"/>
</dbReference>
<dbReference type="SUPFAM" id="SSF89155">
    <property type="entry name" value="TorD-like"/>
    <property type="match status" value="1"/>
</dbReference>
<proteinExistence type="inferred from homology"/>
<accession>B8CSN6</accession>
<name>TORD_SHEPW</name>
<organism>
    <name type="scientific">Shewanella piezotolerans (strain WP3 / JCM 13877)</name>
    <dbReference type="NCBI Taxonomy" id="225849"/>
    <lineage>
        <taxon>Bacteria</taxon>
        <taxon>Pseudomonadati</taxon>
        <taxon>Pseudomonadota</taxon>
        <taxon>Gammaproteobacteria</taxon>
        <taxon>Alteromonadales</taxon>
        <taxon>Shewanellaceae</taxon>
        <taxon>Shewanella</taxon>
    </lineage>
</organism>
<protein>
    <recommendedName>
        <fullName evidence="1">Chaperone protein TorD</fullName>
    </recommendedName>
</protein>
<evidence type="ECO:0000255" key="1">
    <source>
        <dbReference type="HAMAP-Rule" id="MF_01150"/>
    </source>
</evidence>
<sequence length="215" mass="23877">MSAETANPVNQARSTIYQLLSSLFAKEVDHKTLHELTSTQAQAFWSQLAEEPNFKADVDVLVAELAKLNSDKALLELAADYCGLFLVGTNNSASPYASLYLTDTPVAKGDEPLLFGEQHQQMTQFLKQSQLQVQSEFPEPADHLAVILAYVAHIAMYTSNQQQLEFIRDNLTNWLATFVAKVAKVDTGKFYIALAQLTLAWVNSDLEWLTSESTS</sequence>
<comment type="function">
    <text evidence="1">Involved in the biogenesis of TorA. Acts on TorA before the insertion of the molybdenum cofactor and, as a result, probably favors a conformation of the apoenzyme that is competent for acquiring the cofactor.</text>
</comment>
<comment type="subcellular location">
    <subcellularLocation>
        <location evidence="1">Cytoplasm</location>
    </subcellularLocation>
</comment>
<comment type="similarity">
    <text evidence="1">Belongs to the TorD/DmsD family. TorD subfamily.</text>
</comment>
<keyword id="KW-0143">Chaperone</keyword>
<keyword id="KW-0963">Cytoplasm</keyword>
<feature type="chain" id="PRO_0000414903" description="Chaperone protein TorD">
    <location>
        <begin position="1"/>
        <end position="215"/>
    </location>
</feature>
<gene>
    <name evidence="1" type="primary">torD</name>
    <name type="ordered locus">swp_3992</name>
</gene>